<comment type="function">
    <text evidence="1">Transcription factor involved in the expression of a broad class of genes including snRNAs. Required for sporulation and DNA-damage repair. Prevents the spreading of SIR silencing at telomeres and protects histone H4, but not H3, from deacetylation (By similarity).</text>
</comment>
<comment type="subcellular location">
    <subcellularLocation>
        <location evidence="1">Nucleus</location>
    </subcellularLocation>
</comment>
<comment type="induction">
    <text evidence="6 7 8 9">Expression is regulated by FKH2 and repressed upon adherence to polystyrene and interaction with macrophages.</text>
</comment>
<comment type="similarity">
    <text evidence="10">Belongs to the BET family.</text>
</comment>
<comment type="sequence caution" evidence="10">
    <conflict type="erroneous initiation">
        <sequence resource="EMBL-CDS" id="AOW29466"/>
    </conflict>
    <text>Truncated N-terminus.</text>
</comment>
<keyword id="KW-0002">3D-structure</keyword>
<keyword id="KW-0103">Bromodomain</keyword>
<keyword id="KW-0175">Coiled coil</keyword>
<keyword id="KW-0227">DNA damage</keyword>
<keyword id="KW-0234">DNA repair</keyword>
<keyword id="KW-0539">Nucleus</keyword>
<keyword id="KW-1185">Reference proteome</keyword>
<keyword id="KW-0677">Repeat</keyword>
<keyword id="KW-0749">Sporulation</keyword>
<keyword id="KW-0804">Transcription</keyword>
<keyword id="KW-0805">Transcription regulation</keyword>
<gene>
    <name type="primary">BDF1</name>
    <name type="ordered locus">CAALFM_C500200CA</name>
    <name type="ORF">CaO19.8593</name>
    <name type="ORF">CaO19.978</name>
</gene>
<feature type="chain" id="PRO_0000426053" description="Bromodomain-containing factor 1">
    <location>
        <begin position="1"/>
        <end position="732"/>
    </location>
</feature>
<feature type="domain" description="Bromo 1" evidence="3">
    <location>
        <begin position="206"/>
        <end position="315"/>
    </location>
</feature>
<feature type="domain" description="Bromo 2" evidence="3">
    <location>
        <begin position="383"/>
        <end position="492"/>
    </location>
</feature>
<feature type="domain" description="NET" evidence="4">
    <location>
        <begin position="593"/>
        <end position="672"/>
    </location>
</feature>
<feature type="region of interest" description="Disordered" evidence="5">
    <location>
        <begin position="1"/>
        <end position="207"/>
    </location>
</feature>
<feature type="region of interest" description="Disordered" evidence="5">
    <location>
        <begin position="324"/>
        <end position="380"/>
    </location>
</feature>
<feature type="region of interest" description="Disordered" evidence="5">
    <location>
        <begin position="491"/>
        <end position="517"/>
    </location>
</feature>
<feature type="region of interest" description="Disordered" evidence="5">
    <location>
        <begin position="556"/>
        <end position="600"/>
    </location>
</feature>
<feature type="region of interest" description="Disordered" evidence="5">
    <location>
        <begin position="700"/>
        <end position="732"/>
    </location>
</feature>
<feature type="coiled-coil region" evidence="2">
    <location>
        <begin position="529"/>
        <end position="569"/>
    </location>
</feature>
<feature type="compositionally biased region" description="Polar residues" evidence="5">
    <location>
        <begin position="1"/>
        <end position="22"/>
    </location>
</feature>
<feature type="compositionally biased region" description="Low complexity" evidence="5">
    <location>
        <begin position="37"/>
        <end position="51"/>
    </location>
</feature>
<feature type="compositionally biased region" description="Polar residues" evidence="5">
    <location>
        <begin position="89"/>
        <end position="100"/>
    </location>
</feature>
<feature type="compositionally biased region" description="Acidic residues" evidence="5">
    <location>
        <begin position="137"/>
        <end position="147"/>
    </location>
</feature>
<feature type="compositionally biased region" description="Polar residues" evidence="5">
    <location>
        <begin position="327"/>
        <end position="338"/>
    </location>
</feature>
<feature type="compositionally biased region" description="Basic and acidic residues" evidence="5">
    <location>
        <begin position="370"/>
        <end position="380"/>
    </location>
</feature>
<feature type="compositionally biased region" description="Basic residues" evidence="5">
    <location>
        <begin position="561"/>
        <end position="579"/>
    </location>
</feature>
<feature type="compositionally biased region" description="Pro residues" evidence="5">
    <location>
        <begin position="590"/>
        <end position="600"/>
    </location>
</feature>
<feature type="compositionally biased region" description="Acidic residues" evidence="5">
    <location>
        <begin position="718"/>
        <end position="732"/>
    </location>
</feature>
<feature type="helix" evidence="13">
    <location>
        <begin position="212"/>
        <end position="226"/>
    </location>
</feature>
<feature type="helix" evidence="13">
    <location>
        <begin position="229"/>
        <end position="234"/>
    </location>
</feature>
<feature type="strand" evidence="12">
    <location>
        <begin position="235"/>
        <end position="237"/>
    </location>
</feature>
<feature type="turn" evidence="13">
    <location>
        <begin position="240"/>
        <end position="244"/>
    </location>
</feature>
<feature type="helix" evidence="13">
    <location>
        <begin position="248"/>
        <end position="251"/>
    </location>
</feature>
<feature type="helix" evidence="13">
    <location>
        <begin position="258"/>
        <end position="266"/>
    </location>
</feature>
<feature type="helix" evidence="13">
    <location>
        <begin position="273"/>
        <end position="291"/>
    </location>
</feature>
<feature type="helix" evidence="13">
    <location>
        <begin position="296"/>
        <end position="312"/>
    </location>
</feature>
<feature type="helix" evidence="11">
    <location>
        <begin position="386"/>
        <end position="400"/>
    </location>
</feature>
<feature type="helix" evidence="11">
    <location>
        <begin position="402"/>
        <end position="404"/>
    </location>
</feature>
<feature type="helix" evidence="11">
    <location>
        <begin position="405"/>
        <end position="408"/>
    </location>
</feature>
<feature type="helix" evidence="11">
    <location>
        <begin position="409"/>
        <end position="411"/>
    </location>
</feature>
<feature type="turn" evidence="11">
    <location>
        <begin position="417"/>
        <end position="421"/>
    </location>
</feature>
<feature type="helix" evidence="11">
    <location>
        <begin position="425"/>
        <end position="428"/>
    </location>
</feature>
<feature type="strand" evidence="11">
    <location>
        <begin position="429"/>
        <end position="431"/>
    </location>
</feature>
<feature type="helix" evidence="11">
    <location>
        <begin position="435"/>
        <end position="443"/>
    </location>
</feature>
<feature type="helix" evidence="11">
    <location>
        <begin position="450"/>
        <end position="467"/>
    </location>
</feature>
<feature type="helix" evidence="11">
    <location>
        <begin position="473"/>
        <end position="489"/>
    </location>
</feature>
<evidence type="ECO:0000250" key="1"/>
<evidence type="ECO:0000255" key="2"/>
<evidence type="ECO:0000255" key="3">
    <source>
        <dbReference type="PROSITE-ProRule" id="PRU00035"/>
    </source>
</evidence>
<evidence type="ECO:0000255" key="4">
    <source>
        <dbReference type="PROSITE-ProRule" id="PRU00857"/>
    </source>
</evidence>
<evidence type="ECO:0000256" key="5">
    <source>
        <dbReference type="SAM" id="MobiDB-lite"/>
    </source>
</evidence>
<evidence type="ECO:0000269" key="6">
    <source>
    </source>
</evidence>
<evidence type="ECO:0000269" key="7">
    <source>
    </source>
</evidence>
<evidence type="ECO:0000269" key="8">
    <source>
    </source>
</evidence>
<evidence type="ECO:0000269" key="9">
    <source>
    </source>
</evidence>
<evidence type="ECO:0000305" key="10"/>
<evidence type="ECO:0007829" key="11">
    <source>
        <dbReference type="PDB" id="5N13"/>
    </source>
</evidence>
<evidence type="ECO:0007829" key="12">
    <source>
        <dbReference type="PDB" id="5N15"/>
    </source>
</evidence>
<evidence type="ECO:0007829" key="13">
    <source>
        <dbReference type="PDB" id="5N17"/>
    </source>
</evidence>
<proteinExistence type="evidence at protein level"/>
<accession>Q5A4W8</accession>
<accession>A0A1D8PMV0</accession>
<name>BDF1_CANAL</name>
<protein>
    <recommendedName>
        <fullName>Bromodomain-containing factor 1</fullName>
    </recommendedName>
</protein>
<sequence>MSETFPETNTPVQTPSTESFVNKMNAGDKTIGNNIFSQDSDSNQQSSHQEPLSPPNPSPTPEKRQLDDEVDNSIEPESKKQKVEEETEASQTGVIQTEVSETVPEIESSVNKDSEPVNGVSEESENTNNEQEKPQEEAPEENPQEEVPEAKPQEEASGENPQEIPNDKPQDDEPDIQEVDPPKPVVPVFTEPAPKPPQEPDMNNLPENPIPQHQAKFVLNTIKAVKRNREAVPFLHPVDTVKLNVPFYYNYIPRPMDLSTIERKINLKAYEDVSQVVDDFNLMVKNCKKFNGEAAGISKMATNIQAQFEKLMVKVPPKELPAGTNVAEATSVATSPTTNKRKSVAESSSSHQHRDSVAAARPKRTIHPPKSKELPYETKPKNKKVAAELRFCNQTIKELMSKKHYNYNFPFLAPVDTVALNIPNYNEIVKQPMDLGTIQSKLANNEYENADDFEKDVRLVFKNCYLFNPEGTDVNMMGHRLEAVFDKKWANKPVPEPTPQNSDVSDREYSSEEEDNVEISEAMLSEIPAIQVMENQIIRMRKELDELKKEHLKKLREQQAARKKKKQQKGKRRAPKAKHTKDTQHQVQAPPEPPKLTPPQPVVTYEMKKQVSEMVPNLSDKKLNALIKIIQDDVQISNDDEVELDMDQLEDRTVLKLYDFLFGDKALKNSAGKKKKPVANNNLDELAHLRSQLALFDEGVNGQQGSDNGFMKVVNQEESSEDEASSESSEEE</sequence>
<dbReference type="EMBL" id="CP017627">
    <property type="protein sequence ID" value="AOW29466.1"/>
    <property type="status" value="ALT_INIT"/>
    <property type="molecule type" value="Genomic_DNA"/>
</dbReference>
<dbReference type="RefSeq" id="XP_716816.2">
    <property type="nucleotide sequence ID" value="XM_711723.2"/>
</dbReference>
<dbReference type="PDB" id="5N13">
    <property type="method" value="X-ray"/>
    <property type="resolution" value="1.20 A"/>
    <property type="chains" value="A=386-491"/>
</dbReference>
<dbReference type="PDB" id="5N15">
    <property type="method" value="X-ray"/>
    <property type="resolution" value="2.37 A"/>
    <property type="chains" value="A/B/C/D=193-327"/>
</dbReference>
<dbReference type="PDB" id="5N16">
    <property type="method" value="X-ray"/>
    <property type="resolution" value="1.76 A"/>
    <property type="chains" value="A/B/C/D=193-327"/>
</dbReference>
<dbReference type="PDB" id="5N17">
    <property type="method" value="X-ray"/>
    <property type="resolution" value="1.60 A"/>
    <property type="chains" value="A/B=193-327"/>
</dbReference>
<dbReference type="PDB" id="5N18">
    <property type="method" value="X-ray"/>
    <property type="resolution" value="1.45 A"/>
    <property type="chains" value="A/B=386-491"/>
</dbReference>
<dbReference type="PDBsum" id="5N13"/>
<dbReference type="PDBsum" id="5N15"/>
<dbReference type="PDBsum" id="5N16"/>
<dbReference type="PDBsum" id="5N17"/>
<dbReference type="PDBsum" id="5N18"/>
<dbReference type="SMR" id="Q5A4W8"/>
<dbReference type="FunCoup" id="Q5A4W8">
    <property type="interactions" value="572"/>
</dbReference>
<dbReference type="STRING" id="237561.Q5A4W8"/>
<dbReference type="PeptideAtlas" id="Q5A4W8"/>
<dbReference type="GeneID" id="3641592"/>
<dbReference type="KEGG" id="cal:CAALFM_C500200CA"/>
<dbReference type="eggNOG" id="KOG1474">
    <property type="taxonomic scope" value="Eukaryota"/>
</dbReference>
<dbReference type="HOGENOM" id="CLU_001499_4_0_1"/>
<dbReference type="InParanoid" id="Q5A4W8"/>
<dbReference type="OrthoDB" id="784962at2759"/>
<dbReference type="PHI-base" id="PHI:7195"/>
<dbReference type="PRO" id="PR:Q5A4W8"/>
<dbReference type="Proteomes" id="UP000000559">
    <property type="component" value="Chromosome 5"/>
</dbReference>
<dbReference type="GO" id="GO:0000785">
    <property type="term" value="C:chromatin"/>
    <property type="evidence" value="ECO:0000318"/>
    <property type="project" value="GO_Central"/>
</dbReference>
<dbReference type="GO" id="GO:0005634">
    <property type="term" value="C:nucleus"/>
    <property type="evidence" value="ECO:0000318"/>
    <property type="project" value="GO_Central"/>
</dbReference>
<dbReference type="GO" id="GO:0070577">
    <property type="term" value="F:lysine-acetylated histone binding"/>
    <property type="evidence" value="ECO:0000318"/>
    <property type="project" value="GO_Central"/>
</dbReference>
<dbReference type="GO" id="GO:0006338">
    <property type="term" value="P:chromatin remodeling"/>
    <property type="evidence" value="ECO:0000318"/>
    <property type="project" value="GO_Central"/>
</dbReference>
<dbReference type="GO" id="GO:0006281">
    <property type="term" value="P:DNA repair"/>
    <property type="evidence" value="ECO:0007669"/>
    <property type="project" value="UniProtKB-KW"/>
</dbReference>
<dbReference type="GO" id="GO:0006355">
    <property type="term" value="P:regulation of DNA-templated transcription"/>
    <property type="evidence" value="ECO:0000318"/>
    <property type="project" value="GO_Central"/>
</dbReference>
<dbReference type="GO" id="GO:0030435">
    <property type="term" value="P:sporulation resulting in formation of a cellular spore"/>
    <property type="evidence" value="ECO:0007669"/>
    <property type="project" value="UniProtKB-KW"/>
</dbReference>
<dbReference type="CDD" id="cd05499">
    <property type="entry name" value="Bromo_BDF1_2_II"/>
    <property type="match status" value="1"/>
</dbReference>
<dbReference type="FunFam" id="1.20.920.10:FF:000047">
    <property type="entry name" value="Bromodomain-containing factor 1"/>
    <property type="match status" value="1"/>
</dbReference>
<dbReference type="Gene3D" id="1.20.1270.220">
    <property type="match status" value="1"/>
</dbReference>
<dbReference type="Gene3D" id="1.20.920.10">
    <property type="entry name" value="Bromodomain-like"/>
    <property type="match status" value="2"/>
</dbReference>
<dbReference type="InterPro" id="IPR050935">
    <property type="entry name" value="Bromo_chromatin_reader"/>
</dbReference>
<dbReference type="InterPro" id="IPR001487">
    <property type="entry name" value="Bromodomain"/>
</dbReference>
<dbReference type="InterPro" id="IPR036427">
    <property type="entry name" value="Bromodomain-like_sf"/>
</dbReference>
<dbReference type="InterPro" id="IPR018359">
    <property type="entry name" value="Bromodomain_CS"/>
</dbReference>
<dbReference type="InterPro" id="IPR027353">
    <property type="entry name" value="NET_dom"/>
</dbReference>
<dbReference type="InterPro" id="IPR038336">
    <property type="entry name" value="NET_sf"/>
</dbReference>
<dbReference type="PANTHER" id="PTHR22880:SF225">
    <property type="entry name" value="BROMODOMAIN-CONTAINING PROTEIN BET-1-RELATED"/>
    <property type="match status" value="1"/>
</dbReference>
<dbReference type="PANTHER" id="PTHR22880">
    <property type="entry name" value="FALZ-RELATED BROMODOMAIN-CONTAINING PROTEINS"/>
    <property type="match status" value="1"/>
</dbReference>
<dbReference type="Pfam" id="PF17035">
    <property type="entry name" value="BET"/>
    <property type="match status" value="1"/>
</dbReference>
<dbReference type="Pfam" id="PF00439">
    <property type="entry name" value="Bromodomain"/>
    <property type="match status" value="2"/>
</dbReference>
<dbReference type="PRINTS" id="PR00503">
    <property type="entry name" value="BROMODOMAIN"/>
</dbReference>
<dbReference type="SMART" id="SM00297">
    <property type="entry name" value="BROMO"/>
    <property type="match status" value="2"/>
</dbReference>
<dbReference type="SUPFAM" id="SSF47370">
    <property type="entry name" value="Bromodomain"/>
    <property type="match status" value="2"/>
</dbReference>
<dbReference type="PROSITE" id="PS00633">
    <property type="entry name" value="BROMODOMAIN_1"/>
    <property type="match status" value="1"/>
</dbReference>
<dbReference type="PROSITE" id="PS50014">
    <property type="entry name" value="BROMODOMAIN_2"/>
    <property type="match status" value="2"/>
</dbReference>
<dbReference type="PROSITE" id="PS51525">
    <property type="entry name" value="NET"/>
    <property type="match status" value="1"/>
</dbReference>
<reference key="1">
    <citation type="journal article" date="2004" name="Proc. Natl. Acad. Sci. U.S.A.">
        <title>The diploid genome sequence of Candida albicans.</title>
        <authorList>
            <person name="Jones T."/>
            <person name="Federspiel N.A."/>
            <person name="Chibana H."/>
            <person name="Dungan J."/>
            <person name="Kalman S."/>
            <person name="Magee B.B."/>
            <person name="Newport G."/>
            <person name="Thorstenson Y.R."/>
            <person name="Agabian N."/>
            <person name="Magee P.T."/>
            <person name="Davis R.W."/>
            <person name="Scherer S."/>
        </authorList>
    </citation>
    <scope>NUCLEOTIDE SEQUENCE [LARGE SCALE GENOMIC DNA]</scope>
    <source>
        <strain>SC5314 / ATCC MYA-2876</strain>
    </source>
</reference>
<reference key="2">
    <citation type="journal article" date="2007" name="Genome Biol.">
        <title>Assembly of the Candida albicans genome into sixteen supercontigs aligned on the eight chromosomes.</title>
        <authorList>
            <person name="van het Hoog M."/>
            <person name="Rast T.J."/>
            <person name="Martchenko M."/>
            <person name="Grindle S."/>
            <person name="Dignard D."/>
            <person name="Hogues H."/>
            <person name="Cuomo C."/>
            <person name="Berriman M."/>
            <person name="Scherer S."/>
            <person name="Magee B.B."/>
            <person name="Whiteway M."/>
            <person name="Chibana H."/>
            <person name="Nantel A."/>
            <person name="Magee P.T."/>
        </authorList>
    </citation>
    <scope>GENOME REANNOTATION</scope>
    <source>
        <strain>SC5314 / ATCC MYA-2876</strain>
    </source>
</reference>
<reference key="3">
    <citation type="journal article" date="2013" name="Genome Biol.">
        <title>Assembly of a phased diploid Candida albicans genome facilitates allele-specific measurements and provides a simple model for repeat and indel structure.</title>
        <authorList>
            <person name="Muzzey D."/>
            <person name="Schwartz K."/>
            <person name="Weissman J.S."/>
            <person name="Sherlock G."/>
        </authorList>
    </citation>
    <scope>NUCLEOTIDE SEQUENCE [LARGE SCALE GENOMIC DNA]</scope>
    <scope>GENOME REANNOTATION</scope>
    <source>
        <strain>SC5314 / ATCC MYA-2876</strain>
    </source>
</reference>
<reference key="4">
    <citation type="journal article" date="2002" name="Eukaryot. Cell">
        <title>A forkhead transcription factor is important for true hyphal as well as yeast morphogenesis in Candida albicans.</title>
        <authorList>
            <person name="Bensen E.S."/>
            <person name="Filler S.G."/>
            <person name="Berman J."/>
        </authorList>
    </citation>
    <scope>INDUCTION</scope>
</reference>
<reference key="5">
    <citation type="journal article" date="2005" name="Biochem. Biophys. Res. Commun.">
        <title>Global analysis of altered gene expression during morphogenesis of Candida albicans in vitro.</title>
        <authorList>
            <person name="Singh V."/>
            <person name="Sinha I."/>
            <person name="Sadhale P.P."/>
        </authorList>
    </citation>
    <scope>INDUCTION</scope>
</reference>
<reference key="6">
    <citation type="journal article" date="2005" name="FEMS Microbiol. Lett.">
        <title>DNA array analysis of Candida albicans gene expression in response to adherence to polystyrene.</title>
        <authorList>
            <person name="Marchais V."/>
            <person name="Kempf M."/>
            <person name="Licznar P."/>
            <person name="Lefrancois C."/>
            <person name="Bouchara J.P."/>
            <person name="Robert R."/>
            <person name="Cottin J."/>
        </authorList>
    </citation>
    <scope>INDUCTION</scope>
</reference>
<reference key="7">
    <citation type="journal article" date="2007" name="Mol. Cell. Proteomics">
        <title>Integrated proteomics and genomics strategies bring new insight into Candida albicans response upon macrophage interaction.</title>
        <authorList>
            <person name="Fernandez-Arenas E."/>
            <person name="Cabezon V."/>
            <person name="Bermejo C."/>
            <person name="Arroyo J."/>
            <person name="Nombela C."/>
            <person name="Diez-Orejas R."/>
            <person name="Gil C."/>
        </authorList>
    </citation>
    <scope>INDUCTION</scope>
</reference>
<organism>
    <name type="scientific">Candida albicans (strain SC5314 / ATCC MYA-2876)</name>
    <name type="common">Yeast</name>
    <dbReference type="NCBI Taxonomy" id="237561"/>
    <lineage>
        <taxon>Eukaryota</taxon>
        <taxon>Fungi</taxon>
        <taxon>Dikarya</taxon>
        <taxon>Ascomycota</taxon>
        <taxon>Saccharomycotina</taxon>
        <taxon>Pichiomycetes</taxon>
        <taxon>Debaryomycetaceae</taxon>
        <taxon>Candida/Lodderomyces clade</taxon>
        <taxon>Candida</taxon>
    </lineage>
</organism>